<reference key="1">
    <citation type="submission" date="2005-03" db="EMBL/GenBank/DDBJ databases">
        <authorList>
            <person name="Staten N.R."/>
        </authorList>
    </citation>
    <scope>NUCLEOTIDE SEQUENCE [LARGE SCALE MRNA]</scope>
    <source>
        <tissue>Lymph node</tissue>
        <tissue>Thymus</tissue>
    </source>
</reference>
<reference key="2">
    <citation type="journal article" date="2005" name="Nature">
        <title>Genome sequence, comparative analysis and haplotype structure of the domestic dog.</title>
        <authorList>
            <person name="Lindblad-Toh K."/>
            <person name="Wade C.M."/>
            <person name="Mikkelsen T.S."/>
            <person name="Karlsson E.K."/>
            <person name="Jaffe D.B."/>
            <person name="Kamal M."/>
            <person name="Clamp M."/>
            <person name="Chang J.L."/>
            <person name="Kulbokas E.J. III"/>
            <person name="Zody M.C."/>
            <person name="Mauceli E."/>
            <person name="Xie X."/>
            <person name="Breen M."/>
            <person name="Wayne R.K."/>
            <person name="Ostrander E.A."/>
            <person name="Ponting C.P."/>
            <person name="Galibert F."/>
            <person name="Smith D.R."/>
            <person name="deJong P.J."/>
            <person name="Kirkness E.F."/>
            <person name="Alvarez P."/>
            <person name="Biagi T."/>
            <person name="Brockman W."/>
            <person name="Butler J."/>
            <person name="Chin C.-W."/>
            <person name="Cook A."/>
            <person name="Cuff J."/>
            <person name="Daly M.J."/>
            <person name="DeCaprio D."/>
            <person name="Gnerre S."/>
            <person name="Grabherr M."/>
            <person name="Kellis M."/>
            <person name="Kleber M."/>
            <person name="Bardeleben C."/>
            <person name="Goodstadt L."/>
            <person name="Heger A."/>
            <person name="Hitte C."/>
            <person name="Kim L."/>
            <person name="Koepfli K.-P."/>
            <person name="Parker H.G."/>
            <person name="Pollinger J.P."/>
            <person name="Searle S.M.J."/>
            <person name="Sutter N.B."/>
            <person name="Thomas R."/>
            <person name="Webber C."/>
            <person name="Baldwin J."/>
            <person name="Abebe A."/>
            <person name="Abouelleil A."/>
            <person name="Aftuck L."/>
            <person name="Ait-Zahra M."/>
            <person name="Aldredge T."/>
            <person name="Allen N."/>
            <person name="An P."/>
            <person name="Anderson S."/>
            <person name="Antoine C."/>
            <person name="Arachchi H."/>
            <person name="Aslam A."/>
            <person name="Ayotte L."/>
            <person name="Bachantsang P."/>
            <person name="Barry A."/>
            <person name="Bayul T."/>
            <person name="Benamara M."/>
            <person name="Berlin A."/>
            <person name="Bessette D."/>
            <person name="Blitshteyn B."/>
            <person name="Bloom T."/>
            <person name="Blye J."/>
            <person name="Boguslavskiy L."/>
            <person name="Bonnet C."/>
            <person name="Boukhgalter B."/>
            <person name="Brown A."/>
            <person name="Cahill P."/>
            <person name="Calixte N."/>
            <person name="Camarata J."/>
            <person name="Cheshatsang Y."/>
            <person name="Chu J."/>
            <person name="Citroen M."/>
            <person name="Collymore A."/>
            <person name="Cooke P."/>
            <person name="Dawoe T."/>
            <person name="Daza R."/>
            <person name="Decktor K."/>
            <person name="DeGray S."/>
            <person name="Dhargay N."/>
            <person name="Dooley K."/>
            <person name="Dooley K."/>
            <person name="Dorje P."/>
            <person name="Dorjee K."/>
            <person name="Dorris L."/>
            <person name="Duffey N."/>
            <person name="Dupes A."/>
            <person name="Egbiremolen O."/>
            <person name="Elong R."/>
            <person name="Falk J."/>
            <person name="Farina A."/>
            <person name="Faro S."/>
            <person name="Ferguson D."/>
            <person name="Ferreira P."/>
            <person name="Fisher S."/>
            <person name="FitzGerald M."/>
            <person name="Foley K."/>
            <person name="Foley C."/>
            <person name="Franke A."/>
            <person name="Friedrich D."/>
            <person name="Gage D."/>
            <person name="Garber M."/>
            <person name="Gearin G."/>
            <person name="Giannoukos G."/>
            <person name="Goode T."/>
            <person name="Goyette A."/>
            <person name="Graham J."/>
            <person name="Grandbois E."/>
            <person name="Gyaltsen K."/>
            <person name="Hafez N."/>
            <person name="Hagopian D."/>
            <person name="Hagos B."/>
            <person name="Hall J."/>
            <person name="Healy C."/>
            <person name="Hegarty R."/>
            <person name="Honan T."/>
            <person name="Horn A."/>
            <person name="Houde N."/>
            <person name="Hughes L."/>
            <person name="Hunnicutt L."/>
            <person name="Husby M."/>
            <person name="Jester B."/>
            <person name="Jones C."/>
            <person name="Kamat A."/>
            <person name="Kanga B."/>
            <person name="Kells C."/>
            <person name="Khazanovich D."/>
            <person name="Kieu A.C."/>
            <person name="Kisner P."/>
            <person name="Kumar M."/>
            <person name="Lance K."/>
            <person name="Landers T."/>
            <person name="Lara M."/>
            <person name="Lee W."/>
            <person name="Leger J.-P."/>
            <person name="Lennon N."/>
            <person name="Leuper L."/>
            <person name="LeVine S."/>
            <person name="Liu J."/>
            <person name="Liu X."/>
            <person name="Lokyitsang Y."/>
            <person name="Lokyitsang T."/>
            <person name="Lui A."/>
            <person name="Macdonald J."/>
            <person name="Major J."/>
            <person name="Marabella R."/>
            <person name="Maru K."/>
            <person name="Matthews C."/>
            <person name="McDonough S."/>
            <person name="Mehta T."/>
            <person name="Meldrim J."/>
            <person name="Melnikov A."/>
            <person name="Meneus L."/>
            <person name="Mihalev A."/>
            <person name="Mihova T."/>
            <person name="Miller K."/>
            <person name="Mittelman R."/>
            <person name="Mlenga V."/>
            <person name="Mulrain L."/>
            <person name="Munson G."/>
            <person name="Navidi A."/>
            <person name="Naylor J."/>
            <person name="Nguyen T."/>
            <person name="Nguyen N."/>
            <person name="Nguyen C."/>
            <person name="Nguyen T."/>
            <person name="Nicol R."/>
            <person name="Norbu N."/>
            <person name="Norbu C."/>
            <person name="Novod N."/>
            <person name="Nyima T."/>
            <person name="Olandt P."/>
            <person name="O'Neill B."/>
            <person name="O'Neill K."/>
            <person name="Osman S."/>
            <person name="Oyono L."/>
            <person name="Patti C."/>
            <person name="Perrin D."/>
            <person name="Phunkhang P."/>
            <person name="Pierre F."/>
            <person name="Priest M."/>
            <person name="Rachupka A."/>
            <person name="Raghuraman S."/>
            <person name="Rameau R."/>
            <person name="Ray V."/>
            <person name="Raymond C."/>
            <person name="Rege F."/>
            <person name="Rise C."/>
            <person name="Rogers J."/>
            <person name="Rogov P."/>
            <person name="Sahalie J."/>
            <person name="Settipalli S."/>
            <person name="Sharpe T."/>
            <person name="Shea T."/>
            <person name="Sheehan M."/>
            <person name="Sherpa N."/>
            <person name="Shi J."/>
            <person name="Shih D."/>
            <person name="Sloan J."/>
            <person name="Smith C."/>
            <person name="Sparrow T."/>
            <person name="Stalker J."/>
            <person name="Stange-Thomann N."/>
            <person name="Stavropoulos S."/>
            <person name="Stone C."/>
            <person name="Stone S."/>
            <person name="Sykes S."/>
            <person name="Tchuinga P."/>
            <person name="Tenzing P."/>
            <person name="Tesfaye S."/>
            <person name="Thoulutsang D."/>
            <person name="Thoulutsang Y."/>
            <person name="Topham K."/>
            <person name="Topping I."/>
            <person name="Tsamla T."/>
            <person name="Vassiliev H."/>
            <person name="Venkataraman V."/>
            <person name="Vo A."/>
            <person name="Wangchuk T."/>
            <person name="Wangdi T."/>
            <person name="Weiand M."/>
            <person name="Wilkinson J."/>
            <person name="Wilson A."/>
            <person name="Yadav S."/>
            <person name="Yang S."/>
            <person name="Yang X."/>
            <person name="Young G."/>
            <person name="Yu Q."/>
            <person name="Zainoun J."/>
            <person name="Zembek L."/>
            <person name="Zimmer A."/>
            <person name="Lander E.S."/>
        </authorList>
    </citation>
    <scope>NUCLEOTIDE SEQUENCE [LARGE SCALE GENOMIC DNA]</scope>
    <source>
        <strain>Boxer</strain>
    </source>
</reference>
<dbReference type="EMBL" id="DN272794">
    <property type="status" value="NOT_ANNOTATED_CDS"/>
    <property type="molecule type" value="mRNA"/>
</dbReference>
<dbReference type="EMBL" id="DN352654">
    <property type="status" value="NOT_ANNOTATED_CDS"/>
    <property type="molecule type" value="mRNA"/>
</dbReference>
<dbReference type="EMBL" id="AAEX02033438">
    <property type="status" value="NOT_ANNOTATED_CDS"/>
    <property type="molecule type" value="Genomic_DNA"/>
</dbReference>
<dbReference type="RefSeq" id="NP_001300763.1">
    <property type="nucleotide sequence ID" value="NM_001313834.1"/>
</dbReference>
<dbReference type="SMR" id="P0CAN6"/>
<dbReference type="FunCoup" id="P0CAN6">
    <property type="interactions" value="105"/>
</dbReference>
<dbReference type="STRING" id="9615.ENSCAFP00000053606"/>
<dbReference type="GlyCosmos" id="P0CAN6">
    <property type="glycosylation" value="2 sites, No reported glycans"/>
</dbReference>
<dbReference type="PaxDb" id="9612-ENSCAFP00000007407"/>
<dbReference type="Ensembl" id="ENSCAFT00040014193.1">
    <property type="protein sequence ID" value="ENSCAFP00040012276.1"/>
    <property type="gene ID" value="ENSCAFG00040007622.1"/>
</dbReference>
<dbReference type="GeneID" id="484483"/>
<dbReference type="KEGG" id="cfa:484483"/>
<dbReference type="CTD" id="973"/>
<dbReference type="eggNOG" id="ENOG502S1DI">
    <property type="taxonomic scope" value="Eukaryota"/>
</dbReference>
<dbReference type="HOGENOM" id="CLU_106774_0_0_1"/>
<dbReference type="InParanoid" id="P0CAN6"/>
<dbReference type="OMA" id="RWQNEKF"/>
<dbReference type="OrthoDB" id="8915525at2759"/>
<dbReference type="TreeFam" id="TF336032"/>
<dbReference type="Reactome" id="R-CFA-5690714">
    <property type="pathway name" value="CD22 mediated BCR regulation"/>
</dbReference>
<dbReference type="Reactome" id="R-CFA-983695">
    <property type="pathway name" value="Antigen activates B Cell Receptor (BCR) leading to generation of second messengers"/>
</dbReference>
<dbReference type="Proteomes" id="UP000002254">
    <property type="component" value="Unplaced"/>
</dbReference>
<dbReference type="Proteomes" id="UP000694429">
    <property type="component" value="Unplaced"/>
</dbReference>
<dbReference type="Proteomes" id="UP000694542">
    <property type="component" value="Chromosome 1"/>
</dbReference>
<dbReference type="Proteomes" id="UP000805418">
    <property type="component" value="Unplaced"/>
</dbReference>
<dbReference type="Bgee" id="ENSCAFG00000004980">
    <property type="expression patterns" value="Expressed in ovary and 48 other cell types or tissues"/>
</dbReference>
<dbReference type="GO" id="GO:0019815">
    <property type="term" value="C:B cell receptor complex"/>
    <property type="evidence" value="ECO:0000318"/>
    <property type="project" value="GO_Central"/>
</dbReference>
<dbReference type="GO" id="GO:0009897">
    <property type="term" value="C:external side of plasma membrane"/>
    <property type="evidence" value="ECO:0000318"/>
    <property type="project" value="GO_Central"/>
</dbReference>
<dbReference type="GO" id="GO:0071755">
    <property type="term" value="C:IgM B cell receptor complex"/>
    <property type="evidence" value="ECO:0000250"/>
    <property type="project" value="UniProtKB"/>
</dbReference>
<dbReference type="GO" id="GO:0004888">
    <property type="term" value="F:transmembrane signaling receptor activity"/>
    <property type="evidence" value="ECO:0007669"/>
    <property type="project" value="InterPro"/>
</dbReference>
<dbReference type="GO" id="GO:0002250">
    <property type="term" value="P:adaptive immune response"/>
    <property type="evidence" value="ECO:0007669"/>
    <property type="project" value="UniProtKB-KW"/>
</dbReference>
<dbReference type="GO" id="GO:0030183">
    <property type="term" value="P:B cell differentiation"/>
    <property type="evidence" value="ECO:0000318"/>
    <property type="project" value="GO_Central"/>
</dbReference>
<dbReference type="GO" id="GO:0050853">
    <property type="term" value="P:B cell receptor signaling pathway"/>
    <property type="evidence" value="ECO:0000318"/>
    <property type="project" value="GO_Central"/>
</dbReference>
<dbReference type="CDD" id="cd00096">
    <property type="entry name" value="Ig"/>
    <property type="match status" value="1"/>
</dbReference>
<dbReference type="FunFam" id="2.60.40.10:FF:001852">
    <property type="entry name" value="B-cell antigen receptor complex-associated protein alpha chain"/>
    <property type="match status" value="1"/>
</dbReference>
<dbReference type="Gene3D" id="2.60.40.10">
    <property type="entry name" value="Immunoglobulins"/>
    <property type="match status" value="1"/>
</dbReference>
<dbReference type="InterPro" id="IPR007110">
    <property type="entry name" value="Ig-like_dom"/>
</dbReference>
<dbReference type="InterPro" id="IPR036179">
    <property type="entry name" value="Ig-like_dom_sf"/>
</dbReference>
<dbReference type="InterPro" id="IPR013783">
    <property type="entry name" value="Ig-like_fold"/>
</dbReference>
<dbReference type="InterPro" id="IPR003599">
    <property type="entry name" value="Ig_sub"/>
</dbReference>
<dbReference type="InterPro" id="IPR013151">
    <property type="entry name" value="Immunoglobulin_dom"/>
</dbReference>
<dbReference type="InterPro" id="IPR003110">
    <property type="entry name" value="Phos_immunorcpt_sig_ITAM"/>
</dbReference>
<dbReference type="PANTHER" id="PTHR14334">
    <property type="entry name" value="B-CELL ANTIGEN RECEPTOR COMPLEX-ASSOCIATED PROTEIN"/>
    <property type="match status" value="1"/>
</dbReference>
<dbReference type="PANTHER" id="PTHR14334:SF1">
    <property type="entry name" value="B-CELL ANTIGEN RECEPTOR COMPLEX-ASSOCIATED PROTEIN ALPHA CHAIN"/>
    <property type="match status" value="1"/>
</dbReference>
<dbReference type="Pfam" id="PF00047">
    <property type="entry name" value="ig"/>
    <property type="match status" value="1"/>
</dbReference>
<dbReference type="Pfam" id="PF02189">
    <property type="entry name" value="ITAM"/>
    <property type="match status" value="1"/>
</dbReference>
<dbReference type="SMART" id="SM00409">
    <property type="entry name" value="IG"/>
    <property type="match status" value="1"/>
</dbReference>
<dbReference type="SMART" id="SM00077">
    <property type="entry name" value="ITAM"/>
    <property type="match status" value="1"/>
</dbReference>
<dbReference type="SUPFAM" id="SSF48726">
    <property type="entry name" value="Immunoglobulin"/>
    <property type="match status" value="1"/>
</dbReference>
<dbReference type="PROSITE" id="PS50835">
    <property type="entry name" value="IG_LIKE"/>
    <property type="match status" value="1"/>
</dbReference>
<dbReference type="PROSITE" id="PS51055">
    <property type="entry name" value="ITAM_1"/>
    <property type="match status" value="1"/>
</dbReference>
<accession>P0CAN6</accession>
<comment type="function">
    <text evidence="1">Required in cooperation with CD79B for initiation of the signal transduction cascade activated by binding of antigen to the B-cell antigen receptor complex (BCR) which leads to internalization of the complex, trafficking to late endosomes and antigen presentation. Also required for BCR surface expression and for efficient differentiation of pro- and pre-B-cells. Stimulates SYK autophosphorylation and activation. Binds to BLNK, bringing BLNK into proximity with SYK and allowing SYK to phosphorylate BLNK. Also interacts with and increases activity of some Src-family tyrosine kinases. Represses BCR signaling during development of immature B-cells (By similarity).</text>
</comment>
<comment type="subunit">
    <text evidence="1">Heterodimer of alpha and beta chains; disulfide-linked. Part of the B-cell antigen receptor complex where the alpha/beta chain heterodimer is non-covalently associated with an antigen-specific membrane-bound surface immunoglobulin of two heavy chains and two light chains. Interacts through its phosphorylated ITAM domain with the SH2 domains of SYK which stimulates SYK autophosphorylation and activation. Also interacts, when phosphorylated on Tyr-207, with the SH2 domain of BLNK/SLP65, bringing BLNK into proximity with SYK and allowing SYK to phosphorylate BLNK which is necessary for trafficking of the BCR to late endosomes. Interacts with Src-family tyrosine kinases including FYN and LYN, increasing their activity (By similarity).</text>
</comment>
<comment type="subcellular location">
    <subcellularLocation>
        <location evidence="1">Cell membrane</location>
        <topology evidence="1">Single-pass type I membrane protein</topology>
    </subcellularLocation>
    <text evidence="1">Following antigen binding, the BCR has been shown to translocate from detergent-soluble regions of the cell membrane to lipid rafts although signal transduction through the complex can also occur outside lipid rafts.</text>
</comment>
<comment type="domain">
    <text evidence="3">The transmembrane helices of CD79A and CD79B chains and two IgM heavy chains assembly in a four-helix bundle structure that appears to be conserved among different BCR isotypes.</text>
</comment>
<comment type="PTM">
    <text evidence="1">Phosphorylated on tyrosine, serine and threonine residues upon B-cell activation. Phosphorylation of tyrosine residues by Src-family kinases, including LYN, is an early and essential feature of the BCR signaling cascade. The phosphorylated tyrosines serve as docking sites for SH2-domain containing kinases, leading to their activation which in turn leads to phosphorylation of downstream targets. Phosphorylation of serine and threonine residues may prevent subsequent tyrosine phosphorylation (By similarity).</text>
</comment>
<comment type="PTM">
    <text evidence="1">Arginine methylation in the ITAM domain may interfere with the binding of SYK. It promotes signals leading to B-cell differentiation (By similarity).</text>
</comment>
<protein>
    <recommendedName>
        <fullName>B-cell antigen receptor complex-associated protein alpha chain</fullName>
    </recommendedName>
    <alternativeName>
        <fullName>Ig-alpha</fullName>
    </alternativeName>
    <cdAntigenName>CD79a</cdAntigenName>
</protein>
<sequence>MPGGPGLLQALCATTFLLFLISAGGLGPGSQALWVDGGPPSMTVSLGETARLQCLHNRSRLSSKLNITWWRVLQGNATWPDIFLSYGKGPNGELTIDTVNKSHMGMYRCQVEEKDLNQKILSSQQSCGTYLRVRERLPRPFLDMGEGTKNNIITAEGIILLFCAVVPGTLLLFRKRWQNMKFGVDAQDDYEDENLYEGLNLDDCSMYEDISRGLQGTYQDVGSLHIGDGDVQLEKP</sequence>
<gene>
    <name type="primary">CD79A</name>
</gene>
<organism>
    <name type="scientific">Canis lupus familiaris</name>
    <name type="common">Dog</name>
    <name type="synonym">Canis familiaris</name>
    <dbReference type="NCBI Taxonomy" id="9615"/>
    <lineage>
        <taxon>Eukaryota</taxon>
        <taxon>Metazoa</taxon>
        <taxon>Chordata</taxon>
        <taxon>Craniata</taxon>
        <taxon>Vertebrata</taxon>
        <taxon>Euteleostomi</taxon>
        <taxon>Mammalia</taxon>
        <taxon>Eutheria</taxon>
        <taxon>Laurasiatheria</taxon>
        <taxon>Carnivora</taxon>
        <taxon>Caniformia</taxon>
        <taxon>Canidae</taxon>
        <taxon>Canis</taxon>
    </lineage>
</organism>
<keyword id="KW-1064">Adaptive immunity</keyword>
<keyword id="KW-1003">Cell membrane</keyword>
<keyword id="KW-1015">Disulfide bond</keyword>
<keyword id="KW-0325">Glycoprotein</keyword>
<keyword id="KW-0391">Immunity</keyword>
<keyword id="KW-0393">Immunoglobulin domain</keyword>
<keyword id="KW-0472">Membrane</keyword>
<keyword id="KW-0488">Methylation</keyword>
<keyword id="KW-0597">Phosphoprotein</keyword>
<keyword id="KW-0675">Receptor</keyword>
<keyword id="KW-1185">Reference proteome</keyword>
<keyword id="KW-0732">Signal</keyword>
<keyword id="KW-0812">Transmembrane</keyword>
<keyword id="KW-1133">Transmembrane helix</keyword>
<name>CD79A_CANLF</name>
<evidence type="ECO:0000250" key="1"/>
<evidence type="ECO:0000250" key="2">
    <source>
        <dbReference type="UniProtKB" id="P11911"/>
    </source>
</evidence>
<evidence type="ECO:0000250" key="3">
    <source>
        <dbReference type="UniProtKB" id="P11912"/>
    </source>
</evidence>
<evidence type="ECO:0000255" key="4"/>
<evidence type="ECO:0000255" key="5">
    <source>
        <dbReference type="PROSITE-ProRule" id="PRU00114"/>
    </source>
</evidence>
<evidence type="ECO:0000255" key="6">
    <source>
        <dbReference type="PROSITE-ProRule" id="PRU00379"/>
    </source>
</evidence>
<proteinExistence type="evidence at transcript level"/>
<feature type="signal peptide" evidence="4">
    <location>
        <begin position="1"/>
        <end position="32"/>
    </location>
</feature>
<feature type="chain" id="PRO_0000373777" description="B-cell antigen receptor complex-associated protein alpha chain">
    <location>
        <begin position="33"/>
        <end position="236"/>
    </location>
</feature>
<feature type="topological domain" description="Extracellular" evidence="4">
    <location>
        <begin position="33"/>
        <end position="151"/>
    </location>
</feature>
<feature type="transmembrane region" description="Helical" evidence="4">
    <location>
        <begin position="152"/>
        <end position="172"/>
    </location>
</feature>
<feature type="topological domain" description="Cytoplasmic" evidence="4">
    <location>
        <begin position="173"/>
        <end position="236"/>
    </location>
</feature>
<feature type="domain" description="Ig-like C2-type">
    <location>
        <begin position="33"/>
        <end position="122"/>
    </location>
</feature>
<feature type="domain" description="ITAM" evidence="6">
    <location>
        <begin position="185"/>
        <end position="213"/>
    </location>
</feature>
<feature type="site" description="Required for binding to BLNK" evidence="1">
    <location>
        <position position="218"/>
    </location>
</feature>
<feature type="modified residue" description="Phosphotyrosine; by SRC-type Tyr-kinases" evidence="2 6">
    <location>
        <position position="196"/>
    </location>
</feature>
<feature type="modified residue" description="Phosphotyrosine" evidence="2 6">
    <location>
        <position position="207"/>
    </location>
</feature>
<feature type="modified residue" description="Asymmetric dimethylarginine; by PRMT1" evidence="2">
    <location>
        <position position="212"/>
    </location>
</feature>
<feature type="modified residue" description="Phosphotyrosine; by Tyr-kinases" evidence="2 6">
    <location>
        <position position="218"/>
    </location>
</feature>
<feature type="glycosylation site" description="N-linked (GlcNAc...) asparagine" evidence="4">
    <location>
        <position position="66"/>
    </location>
</feature>
<feature type="glycosylation site" description="N-linked (GlcNAc...) asparagine" evidence="4">
    <location>
        <position position="76"/>
    </location>
</feature>
<feature type="disulfide bond" evidence="5">
    <location>
        <begin position="54"/>
        <end position="109"/>
    </location>
</feature>
<feature type="disulfide bond" description="Interchain (with beta chain)" evidence="5">
    <location>
        <position position="127"/>
    </location>
</feature>